<accession>Q9KGJ4</accession>
<comment type="function">
    <text evidence="1">This is one of the proteins that binds to the 5S RNA in the ribosome where it forms part of the central protuberance.</text>
</comment>
<comment type="subunit">
    <text evidence="1">Part of the 50S ribosomal subunit; part of the 5S rRNA/L5/L18/L25 subcomplex. Contacts the 5S rRNA. Binds to the 5S rRNA independently of L5 and L18.</text>
</comment>
<comment type="similarity">
    <text evidence="1">Belongs to the bacterial ribosomal protein bL25 family. CTC subfamily.</text>
</comment>
<reference key="1">
    <citation type="journal article" date="2000" name="Nucleic Acids Res.">
        <title>Complete genome sequence of the alkaliphilic bacterium Bacillus halodurans and genomic sequence comparison with Bacillus subtilis.</title>
        <authorList>
            <person name="Takami H."/>
            <person name="Nakasone K."/>
            <person name="Takaki Y."/>
            <person name="Maeno G."/>
            <person name="Sasaki R."/>
            <person name="Masui N."/>
            <person name="Fuji F."/>
            <person name="Hirama C."/>
            <person name="Nakamura Y."/>
            <person name="Ogasawara N."/>
            <person name="Kuhara S."/>
            <person name="Horikoshi K."/>
        </authorList>
    </citation>
    <scope>NUCLEOTIDE SEQUENCE [LARGE SCALE GENOMIC DNA]</scope>
    <source>
        <strain>ATCC BAA-125 / DSM 18197 / FERM 7344 / JCM 9153 / C-125</strain>
    </source>
</reference>
<name>RL25_HALH5</name>
<evidence type="ECO:0000255" key="1">
    <source>
        <dbReference type="HAMAP-Rule" id="MF_01334"/>
    </source>
</evidence>
<evidence type="ECO:0000256" key="2">
    <source>
        <dbReference type="SAM" id="MobiDB-lite"/>
    </source>
</evidence>
<evidence type="ECO:0000305" key="3"/>
<gene>
    <name evidence="1" type="primary">rplY</name>
    <name evidence="1" type="synonym">ctc</name>
    <name type="ordered locus">BH0067</name>
</gene>
<proteinExistence type="inferred from homology"/>
<dbReference type="EMBL" id="BA000004">
    <property type="protein sequence ID" value="BAB03786.1"/>
    <property type="molecule type" value="Genomic_DNA"/>
</dbReference>
<dbReference type="PIR" id="C83658">
    <property type="entry name" value="C83658"/>
</dbReference>
<dbReference type="RefSeq" id="WP_010896251.1">
    <property type="nucleotide sequence ID" value="NC_002570.2"/>
</dbReference>
<dbReference type="SMR" id="Q9KGJ4"/>
<dbReference type="STRING" id="272558.gene:10725889"/>
<dbReference type="KEGG" id="bha:BH0067"/>
<dbReference type="eggNOG" id="COG1825">
    <property type="taxonomic scope" value="Bacteria"/>
</dbReference>
<dbReference type="HOGENOM" id="CLU_075939_2_0_9"/>
<dbReference type="OrthoDB" id="9790002at2"/>
<dbReference type="Proteomes" id="UP000001258">
    <property type="component" value="Chromosome"/>
</dbReference>
<dbReference type="GO" id="GO:0022625">
    <property type="term" value="C:cytosolic large ribosomal subunit"/>
    <property type="evidence" value="ECO:0007669"/>
    <property type="project" value="TreeGrafter"/>
</dbReference>
<dbReference type="GO" id="GO:0008097">
    <property type="term" value="F:5S rRNA binding"/>
    <property type="evidence" value="ECO:0007669"/>
    <property type="project" value="InterPro"/>
</dbReference>
<dbReference type="GO" id="GO:0003735">
    <property type="term" value="F:structural constituent of ribosome"/>
    <property type="evidence" value="ECO:0007669"/>
    <property type="project" value="InterPro"/>
</dbReference>
<dbReference type="GO" id="GO:0006412">
    <property type="term" value="P:translation"/>
    <property type="evidence" value="ECO:0007669"/>
    <property type="project" value="UniProtKB-UniRule"/>
</dbReference>
<dbReference type="CDD" id="cd00495">
    <property type="entry name" value="Ribosomal_L25_TL5_CTC"/>
    <property type="match status" value="1"/>
</dbReference>
<dbReference type="Gene3D" id="2.170.120.20">
    <property type="entry name" value="Ribosomal protein L25, beta domain"/>
    <property type="match status" value="1"/>
</dbReference>
<dbReference type="Gene3D" id="2.40.240.10">
    <property type="entry name" value="Ribosomal Protein L25, Chain P"/>
    <property type="match status" value="1"/>
</dbReference>
<dbReference type="HAMAP" id="MF_01334">
    <property type="entry name" value="Ribosomal_bL25_CTC"/>
    <property type="match status" value="1"/>
</dbReference>
<dbReference type="InterPro" id="IPR020056">
    <property type="entry name" value="Rbsml_bL25/Gln-tRNA_synth_N"/>
</dbReference>
<dbReference type="InterPro" id="IPR011035">
    <property type="entry name" value="Ribosomal_bL25/Gln-tRNA_synth"/>
</dbReference>
<dbReference type="InterPro" id="IPR020057">
    <property type="entry name" value="Ribosomal_bL25_b-dom"/>
</dbReference>
<dbReference type="InterPro" id="IPR037121">
    <property type="entry name" value="Ribosomal_bL25_C"/>
</dbReference>
<dbReference type="InterPro" id="IPR001021">
    <property type="entry name" value="Ribosomal_bL25_long"/>
</dbReference>
<dbReference type="InterPro" id="IPR029751">
    <property type="entry name" value="Ribosomal_L25_dom"/>
</dbReference>
<dbReference type="InterPro" id="IPR020930">
    <property type="entry name" value="Ribosomal_uL5_bac-type"/>
</dbReference>
<dbReference type="NCBIfam" id="TIGR00731">
    <property type="entry name" value="bL25_bact_ctc"/>
    <property type="match status" value="1"/>
</dbReference>
<dbReference type="NCBIfam" id="NF004133">
    <property type="entry name" value="PRK05618.2-4"/>
    <property type="match status" value="1"/>
</dbReference>
<dbReference type="PANTHER" id="PTHR33284">
    <property type="entry name" value="RIBOSOMAL PROTEIN L25/GLN-TRNA SYNTHETASE, ANTI-CODON-BINDING DOMAIN-CONTAINING PROTEIN"/>
    <property type="match status" value="1"/>
</dbReference>
<dbReference type="PANTHER" id="PTHR33284:SF1">
    <property type="entry name" value="RIBOSOMAL PROTEIN L25_GLN-TRNA SYNTHETASE, ANTI-CODON-BINDING DOMAIN-CONTAINING PROTEIN"/>
    <property type="match status" value="1"/>
</dbReference>
<dbReference type="Pfam" id="PF01386">
    <property type="entry name" value="Ribosomal_L25p"/>
    <property type="match status" value="1"/>
</dbReference>
<dbReference type="Pfam" id="PF14693">
    <property type="entry name" value="Ribosomal_TL5_C"/>
    <property type="match status" value="1"/>
</dbReference>
<dbReference type="SUPFAM" id="SSF50715">
    <property type="entry name" value="Ribosomal protein L25-like"/>
    <property type="match status" value="1"/>
</dbReference>
<organism>
    <name type="scientific">Halalkalibacterium halodurans (strain ATCC BAA-125 / DSM 18197 / FERM 7344 / JCM 9153 / C-125)</name>
    <name type="common">Bacillus halodurans</name>
    <dbReference type="NCBI Taxonomy" id="272558"/>
    <lineage>
        <taxon>Bacteria</taxon>
        <taxon>Bacillati</taxon>
        <taxon>Bacillota</taxon>
        <taxon>Bacilli</taxon>
        <taxon>Bacillales</taxon>
        <taxon>Bacillaceae</taxon>
        <taxon>Halalkalibacterium (ex Joshi et al. 2022)</taxon>
    </lineage>
</organism>
<feature type="chain" id="PRO_0000181509" description="Large ribosomal subunit protein bL25">
    <location>
        <begin position="1"/>
        <end position="215"/>
    </location>
</feature>
<feature type="region of interest" description="Disordered" evidence="2">
    <location>
        <begin position="174"/>
        <end position="215"/>
    </location>
</feature>
<feature type="compositionally biased region" description="Acidic residues" evidence="2">
    <location>
        <begin position="186"/>
        <end position="215"/>
    </location>
</feature>
<protein>
    <recommendedName>
        <fullName evidence="1">Large ribosomal subunit protein bL25</fullName>
    </recommendedName>
    <alternativeName>
        <fullName evidence="3">50S ribosomal protein L25</fullName>
    </alternativeName>
    <alternativeName>
        <fullName evidence="1">General stress protein CTC</fullName>
    </alternativeName>
</protein>
<keyword id="KW-1185">Reference proteome</keyword>
<keyword id="KW-0687">Ribonucleoprotein</keyword>
<keyword id="KW-0689">Ribosomal protein</keyword>
<keyword id="KW-0694">RNA-binding</keyword>
<keyword id="KW-0699">rRNA-binding</keyword>
<sequence>MAMSLKAEKRPDLRGSVTRKIRKQGYVPAVVYGNKTKSQPISVEAVDFLKTVREVGRNGLISLEVEKGTKHQVMVHDLQMDPLKGDYLHIDFFEVDMSSEIEANVPVRLTGEARGVSEGGVLSQLMYEITVRSLPADIPEEITLDVSSLAIGDSIQIRDVRGNVPVQVVNEDEETVVTVQPPATEKEEETEAAVTDSEPEVINEKEEPAEEAKEE</sequence>